<feature type="chain" id="PRO_0000159147" description="Polyferredoxin protein VhuB">
    <location>
        <begin position="1"/>
        <end position="398"/>
    </location>
</feature>
<feature type="domain" description="4Fe-4S ferredoxin-type 1" evidence="2">
    <location>
        <begin position="2"/>
        <end position="31"/>
    </location>
</feature>
<feature type="domain" description="4Fe-4S ferredoxin-type 2" evidence="2">
    <location>
        <begin position="25"/>
        <end position="53"/>
    </location>
</feature>
<feature type="domain" description="4Fe-4S ferredoxin-type 3" evidence="2">
    <location>
        <begin position="54"/>
        <end position="83"/>
    </location>
</feature>
<feature type="domain" description="4Fe-4S ferredoxin-type 4" evidence="2">
    <location>
        <begin position="82"/>
        <end position="111"/>
    </location>
</feature>
<feature type="domain" description="4Fe-4S ferredoxin-type 5" evidence="2">
    <location>
        <begin position="123"/>
        <end position="152"/>
    </location>
</feature>
<feature type="domain" description="4Fe-4S ferredoxin-type 6" evidence="2">
    <location>
        <begin position="152"/>
        <end position="181"/>
    </location>
</feature>
<feature type="domain" description="4Fe-4S ferredoxin-type 7" evidence="2">
    <location>
        <begin position="191"/>
        <end position="219"/>
    </location>
</feature>
<feature type="domain" description="4Fe-4S ferredoxin-type 8" evidence="2">
    <location>
        <begin position="220"/>
        <end position="249"/>
    </location>
</feature>
<feature type="domain" description="4Fe-4S ferredoxin-type 9" evidence="2">
    <location>
        <begin position="259"/>
        <end position="291"/>
    </location>
</feature>
<feature type="domain" description="4Fe-4S ferredoxin-type 10" evidence="2">
    <location>
        <begin position="300"/>
        <end position="331"/>
    </location>
</feature>
<feature type="domain" description="4Fe-4S ferredoxin-type 11" evidence="2">
    <location>
        <begin position="339"/>
        <end position="368"/>
    </location>
</feature>
<feature type="binding site" evidence="1">
    <location>
        <position position="11"/>
    </location>
    <ligand>
        <name>[4Fe-4S] cluster</name>
        <dbReference type="ChEBI" id="CHEBI:49883"/>
    </ligand>
</feature>
<feature type="binding site" evidence="1">
    <location>
        <position position="14"/>
    </location>
    <ligand>
        <name>[4Fe-4S] cluster</name>
        <dbReference type="ChEBI" id="CHEBI:49883"/>
    </ligand>
</feature>
<feature type="binding site" evidence="1">
    <location>
        <position position="17"/>
    </location>
    <ligand>
        <name>[4Fe-4S] cluster</name>
        <dbReference type="ChEBI" id="CHEBI:49883"/>
    </ligand>
</feature>
<feature type="binding site" evidence="1">
    <location>
        <position position="21"/>
    </location>
    <ligand>
        <name>[4Fe-4S] cluster</name>
        <dbReference type="ChEBI" id="CHEBI:49883"/>
    </ligand>
</feature>
<feature type="binding site" evidence="1">
    <location>
        <position position="34"/>
    </location>
    <ligand>
        <name>[4Fe-4S] cluster</name>
        <dbReference type="ChEBI" id="CHEBI:49883"/>
    </ligand>
</feature>
<feature type="binding site" evidence="1">
    <location>
        <position position="37"/>
    </location>
    <ligand>
        <name>[4Fe-4S] cluster</name>
        <dbReference type="ChEBI" id="CHEBI:49883"/>
    </ligand>
</feature>
<feature type="binding site" evidence="1">
    <location>
        <position position="40"/>
    </location>
    <ligand>
        <name>[4Fe-4S] cluster</name>
        <dbReference type="ChEBI" id="CHEBI:49883"/>
    </ligand>
</feature>
<feature type="binding site" evidence="1">
    <location>
        <position position="44"/>
    </location>
    <ligand>
        <name>[4Fe-4S] cluster</name>
        <dbReference type="ChEBI" id="CHEBI:49883"/>
    </ligand>
</feature>
<feature type="binding site" evidence="1">
    <location>
        <position position="63"/>
    </location>
    <ligand>
        <name>[4Fe-4S] cluster</name>
        <dbReference type="ChEBI" id="CHEBI:49883"/>
    </ligand>
</feature>
<feature type="binding site" evidence="1">
    <location>
        <position position="66"/>
    </location>
    <ligand>
        <name>[4Fe-4S] cluster</name>
        <dbReference type="ChEBI" id="CHEBI:49883"/>
    </ligand>
</feature>
<feature type="binding site" evidence="1">
    <location>
        <position position="69"/>
    </location>
    <ligand>
        <name>[4Fe-4S] cluster</name>
        <dbReference type="ChEBI" id="CHEBI:49883"/>
    </ligand>
</feature>
<feature type="binding site" evidence="1">
    <location>
        <position position="73"/>
    </location>
    <ligand>
        <name>[4Fe-4S] cluster</name>
        <dbReference type="ChEBI" id="CHEBI:49883"/>
    </ligand>
</feature>
<feature type="binding site" evidence="1">
    <location>
        <position position="91"/>
    </location>
    <ligand>
        <name>[4Fe-4S] cluster</name>
        <dbReference type="ChEBI" id="CHEBI:49883"/>
    </ligand>
</feature>
<feature type="binding site" evidence="1">
    <location>
        <position position="94"/>
    </location>
    <ligand>
        <name>[4Fe-4S] cluster</name>
        <dbReference type="ChEBI" id="CHEBI:49883"/>
    </ligand>
</feature>
<feature type="binding site" evidence="1">
    <location>
        <position position="97"/>
    </location>
    <ligand>
        <name>[4Fe-4S] cluster</name>
        <dbReference type="ChEBI" id="CHEBI:49883"/>
    </ligand>
</feature>
<feature type="binding site" evidence="1">
    <location>
        <position position="101"/>
    </location>
    <ligand>
        <name>[4Fe-4S] cluster</name>
        <dbReference type="ChEBI" id="CHEBI:49883"/>
    </ligand>
</feature>
<feature type="binding site" evidence="1">
    <location>
        <position position="132"/>
    </location>
    <ligand>
        <name>[4Fe-4S] cluster</name>
        <dbReference type="ChEBI" id="CHEBI:49883"/>
    </ligand>
</feature>
<feature type="binding site" evidence="1">
    <location>
        <position position="135"/>
    </location>
    <ligand>
        <name>[4Fe-4S] cluster</name>
        <dbReference type="ChEBI" id="CHEBI:49883"/>
    </ligand>
</feature>
<feature type="binding site" evidence="1">
    <location>
        <position position="138"/>
    </location>
    <ligand>
        <name>[4Fe-4S] cluster</name>
        <dbReference type="ChEBI" id="CHEBI:49883"/>
    </ligand>
</feature>
<feature type="binding site" evidence="1">
    <location>
        <position position="142"/>
    </location>
    <ligand>
        <name>[4Fe-4S] cluster</name>
        <dbReference type="ChEBI" id="CHEBI:49883"/>
    </ligand>
</feature>
<feature type="binding site" evidence="1">
    <location>
        <position position="161"/>
    </location>
    <ligand>
        <name>[4Fe-4S] cluster</name>
        <dbReference type="ChEBI" id="CHEBI:49883"/>
    </ligand>
</feature>
<feature type="binding site" evidence="1">
    <location>
        <position position="164"/>
    </location>
    <ligand>
        <name>[4Fe-4S] cluster</name>
        <dbReference type="ChEBI" id="CHEBI:49883"/>
    </ligand>
</feature>
<feature type="binding site" evidence="1">
    <location>
        <position position="167"/>
    </location>
    <ligand>
        <name>[4Fe-4S] cluster</name>
        <dbReference type="ChEBI" id="CHEBI:49883"/>
    </ligand>
</feature>
<feature type="binding site" evidence="1">
    <location>
        <position position="171"/>
    </location>
    <ligand>
        <name>[4Fe-4S] cluster</name>
        <dbReference type="ChEBI" id="CHEBI:49883"/>
    </ligand>
</feature>
<feature type="binding site" evidence="1">
    <location>
        <position position="199"/>
    </location>
    <ligand>
        <name>[4Fe-4S] cluster</name>
        <dbReference type="ChEBI" id="CHEBI:49883"/>
    </ligand>
</feature>
<feature type="binding site" evidence="1">
    <location>
        <position position="202"/>
    </location>
    <ligand>
        <name>[4Fe-4S] cluster</name>
        <dbReference type="ChEBI" id="CHEBI:49883"/>
    </ligand>
</feature>
<feature type="binding site" evidence="1">
    <location>
        <position position="205"/>
    </location>
    <ligand>
        <name>[4Fe-4S] cluster</name>
        <dbReference type="ChEBI" id="CHEBI:49883"/>
    </ligand>
</feature>
<feature type="binding site" evidence="1">
    <location>
        <position position="209"/>
    </location>
    <ligand>
        <name>[4Fe-4S] cluster</name>
        <dbReference type="ChEBI" id="CHEBI:49883"/>
    </ligand>
</feature>
<feature type="binding site" evidence="1">
    <location>
        <position position="229"/>
    </location>
    <ligand>
        <name>[4Fe-4S] cluster</name>
        <dbReference type="ChEBI" id="CHEBI:49883"/>
    </ligand>
</feature>
<feature type="binding site" evidence="1">
    <location>
        <position position="232"/>
    </location>
    <ligand>
        <name>[4Fe-4S] cluster</name>
        <dbReference type="ChEBI" id="CHEBI:49883"/>
    </ligand>
</feature>
<feature type="binding site" evidence="1">
    <location>
        <position position="235"/>
    </location>
    <ligand>
        <name>[4Fe-4S] cluster</name>
        <dbReference type="ChEBI" id="CHEBI:49883"/>
    </ligand>
</feature>
<feature type="binding site" evidence="1">
    <location>
        <position position="239"/>
    </location>
    <ligand>
        <name>[4Fe-4S] cluster</name>
        <dbReference type="ChEBI" id="CHEBI:49883"/>
    </ligand>
</feature>
<feature type="binding site" evidence="1">
    <location>
        <position position="268"/>
    </location>
    <ligand>
        <name>[4Fe-4S] cluster</name>
        <dbReference type="ChEBI" id="CHEBI:49883"/>
    </ligand>
</feature>
<feature type="binding site" evidence="1">
    <location>
        <position position="271"/>
    </location>
    <ligand>
        <name>[4Fe-4S] cluster</name>
        <dbReference type="ChEBI" id="CHEBI:49883"/>
    </ligand>
</feature>
<feature type="binding site" evidence="1">
    <location>
        <position position="274"/>
    </location>
    <ligand>
        <name>[4Fe-4S] cluster</name>
        <dbReference type="ChEBI" id="CHEBI:49883"/>
    </ligand>
</feature>
<feature type="binding site" evidence="1">
    <location>
        <position position="278"/>
    </location>
    <ligand>
        <name>[4Fe-4S] cluster</name>
        <dbReference type="ChEBI" id="CHEBI:49883"/>
    </ligand>
</feature>
<feature type="binding site" evidence="1">
    <location>
        <position position="311"/>
    </location>
    <ligand>
        <name>[4Fe-4S] cluster</name>
        <dbReference type="ChEBI" id="CHEBI:49883"/>
    </ligand>
</feature>
<feature type="binding site" evidence="1">
    <location>
        <position position="314"/>
    </location>
    <ligand>
        <name>[4Fe-4S] cluster</name>
        <dbReference type="ChEBI" id="CHEBI:49883"/>
    </ligand>
</feature>
<feature type="binding site" evidence="1">
    <location>
        <position position="317"/>
    </location>
    <ligand>
        <name>[4Fe-4S] cluster</name>
        <dbReference type="ChEBI" id="CHEBI:49883"/>
    </ligand>
</feature>
<feature type="binding site" evidence="1">
    <location>
        <position position="321"/>
    </location>
    <ligand>
        <name>[4Fe-4S] cluster</name>
        <dbReference type="ChEBI" id="CHEBI:49883"/>
    </ligand>
</feature>
<feature type="binding site" evidence="1">
    <location>
        <position position="348"/>
    </location>
    <ligand>
        <name>[4Fe-4S] cluster</name>
        <dbReference type="ChEBI" id="CHEBI:49883"/>
    </ligand>
</feature>
<feature type="binding site" evidence="1">
    <location>
        <position position="351"/>
    </location>
    <ligand>
        <name>[4Fe-4S] cluster</name>
        <dbReference type="ChEBI" id="CHEBI:49883"/>
    </ligand>
</feature>
<feature type="binding site" evidence="1">
    <location>
        <position position="354"/>
    </location>
    <ligand>
        <name>[4Fe-4S] cluster</name>
        <dbReference type="ChEBI" id="CHEBI:49883"/>
    </ligand>
</feature>
<feature type="binding site" evidence="1">
    <location>
        <position position="358"/>
    </location>
    <ligand>
        <name>[4Fe-4S] cluster</name>
        <dbReference type="ChEBI" id="CHEBI:49883"/>
    </ligand>
</feature>
<feature type="binding site" evidence="1">
    <location>
        <position position="377"/>
    </location>
    <ligand>
        <name>[4Fe-4S] cluster</name>
        <dbReference type="ChEBI" id="CHEBI:49883"/>
    </ligand>
</feature>
<feature type="binding site" evidence="1">
    <location>
        <position position="380"/>
    </location>
    <ligand>
        <name>[4Fe-4S] cluster</name>
        <dbReference type="ChEBI" id="CHEBI:49883"/>
    </ligand>
</feature>
<feature type="binding site" evidence="1">
    <location>
        <position position="383"/>
    </location>
    <ligand>
        <name>[4Fe-4S] cluster</name>
        <dbReference type="ChEBI" id="CHEBI:49883"/>
    </ligand>
</feature>
<feature type="binding site" evidence="1">
    <location>
        <position position="387"/>
    </location>
    <ligand>
        <name>[4Fe-4S] cluster</name>
        <dbReference type="ChEBI" id="CHEBI:49883"/>
    </ligand>
</feature>
<dbReference type="EMBL" id="X61204">
    <property type="protein sequence ID" value="CAA43512.1"/>
    <property type="molecule type" value="Genomic_DNA"/>
</dbReference>
<dbReference type="PIR" id="S24802">
    <property type="entry name" value="S24802"/>
</dbReference>
<dbReference type="GO" id="GO:0051539">
    <property type="term" value="F:4 iron, 4 sulfur cluster binding"/>
    <property type="evidence" value="ECO:0007669"/>
    <property type="project" value="UniProtKB-KW"/>
</dbReference>
<dbReference type="GO" id="GO:0046872">
    <property type="term" value="F:metal ion binding"/>
    <property type="evidence" value="ECO:0007669"/>
    <property type="project" value="UniProtKB-KW"/>
</dbReference>
<dbReference type="GO" id="GO:0016491">
    <property type="term" value="F:oxidoreductase activity"/>
    <property type="evidence" value="ECO:0007669"/>
    <property type="project" value="UniProtKB-ARBA"/>
</dbReference>
<dbReference type="CDD" id="cd10549">
    <property type="entry name" value="MtMvhB_like"/>
    <property type="match status" value="2"/>
</dbReference>
<dbReference type="Gene3D" id="3.30.70.20">
    <property type="match status" value="6"/>
</dbReference>
<dbReference type="InterPro" id="IPR017896">
    <property type="entry name" value="4Fe4S_Fe-S-bd"/>
</dbReference>
<dbReference type="InterPro" id="IPR017900">
    <property type="entry name" value="4Fe4S_Fe_S_CS"/>
</dbReference>
<dbReference type="InterPro" id="IPR050572">
    <property type="entry name" value="Fe-S_Ferredoxin"/>
</dbReference>
<dbReference type="NCBIfam" id="NF045874">
    <property type="entry name" value="Vhu_polyferre"/>
    <property type="match status" value="1"/>
</dbReference>
<dbReference type="PANTHER" id="PTHR43687">
    <property type="entry name" value="ADENYLYLSULFATE REDUCTASE, BETA SUBUNIT"/>
    <property type="match status" value="1"/>
</dbReference>
<dbReference type="PANTHER" id="PTHR43687:SF1">
    <property type="entry name" value="FERREDOXIN III"/>
    <property type="match status" value="1"/>
</dbReference>
<dbReference type="Pfam" id="PF00037">
    <property type="entry name" value="Fer4"/>
    <property type="match status" value="1"/>
</dbReference>
<dbReference type="Pfam" id="PF14697">
    <property type="entry name" value="Fer4_21"/>
    <property type="match status" value="1"/>
</dbReference>
<dbReference type="Pfam" id="PF12838">
    <property type="entry name" value="Fer4_7"/>
    <property type="match status" value="2"/>
</dbReference>
<dbReference type="Pfam" id="PF13187">
    <property type="entry name" value="Fer4_9"/>
    <property type="match status" value="1"/>
</dbReference>
<dbReference type="SUPFAM" id="SSF54862">
    <property type="entry name" value="4Fe-4S ferredoxins"/>
    <property type="match status" value="3"/>
</dbReference>
<dbReference type="PROSITE" id="PS00198">
    <property type="entry name" value="4FE4S_FER_1"/>
    <property type="match status" value="11"/>
</dbReference>
<dbReference type="PROSITE" id="PS51379">
    <property type="entry name" value="4FE4S_FER_2"/>
    <property type="match status" value="11"/>
</dbReference>
<evidence type="ECO:0000255" key="1"/>
<evidence type="ECO:0000255" key="2">
    <source>
        <dbReference type="PROSITE-ProRule" id="PRU00711"/>
    </source>
</evidence>
<evidence type="ECO:0000305" key="3"/>
<protein>
    <recommendedName>
        <fullName>Polyferredoxin protein VhuB</fullName>
    </recommendedName>
</protein>
<proteinExistence type="predicted"/>
<accession>Q00388</accession>
<accession>P95320</accession>
<gene>
    <name type="primary">vhuB</name>
</gene>
<keyword id="KW-0004">4Fe-4S</keyword>
<keyword id="KW-0249">Electron transport</keyword>
<keyword id="KW-0408">Iron</keyword>
<keyword id="KW-0411">Iron-sulfur</keyword>
<keyword id="KW-0479">Metal-binding</keyword>
<keyword id="KW-0677">Repeat</keyword>
<keyword id="KW-0813">Transport</keyword>
<reference key="1">
    <citation type="journal article" date="1992" name="Mol. Gen. Genet.">
        <title>Methanococcus voltae harbors four gene clusters potentially encoding two [NiFe] and two [NiFeSe] hydrogenases, each of the cofactor F420-reducing or F420-non-reducing types.</title>
        <authorList>
            <person name="Halboth S."/>
            <person name="Klein A."/>
        </authorList>
    </citation>
    <scope>NUCLEOTIDE SEQUENCE [GENOMIC DNA]</scope>
    <source>
        <strain>ATCC 33273 / DSM 1537 / NBRC 100457 / OCM 70 / PS</strain>
    </source>
</reference>
<sequence length="398" mass="43188">MAGIKIQEDACLVCNACSKACPTEAIEIAPFKTCTLCFSCASACPTGALVENNGKLIYNSSKCIKCGNCATACPTGIKKVDDRFPYSKGHCVLCEKCVDACPIDIISIPGKIDKPEREVTIPQEPIKVTEACVGCSECVPVCPVDAISIEDELAVIDTEKCIYCSVCAQTCPWNAIYVAGKKPSKRQKEIKSFTVTEECIGCEKCVEVCPGDMITYNREDLIVKLPEACPACHLCEQNCPVDAISLEVEYGSAKPVTEEGLVWYEDKCNYCGPCAIKCPLCPTNAINMINQKGLALPSRTKTDKDPEFRMCIRCGACVMKCPTGALKMGKITHEGKEYNRIEFSPALCNECGECVDVCPQDTLKLTGDEKKPLEGYCILCLKCIEACAKTKRNALGLQ</sequence>
<organism>
    <name type="scientific">Methanococcus voltae</name>
    <dbReference type="NCBI Taxonomy" id="2188"/>
    <lineage>
        <taxon>Archaea</taxon>
        <taxon>Methanobacteriati</taxon>
        <taxon>Methanobacteriota</taxon>
        <taxon>Methanomada group</taxon>
        <taxon>Methanococci</taxon>
        <taxon>Methanococcales</taxon>
        <taxon>Methanococcaceae</taxon>
        <taxon>Methanococcus</taxon>
    </lineage>
</organism>
<comment type="cofactor">
    <cofactor evidence="3">
        <name>[4Fe-4S] cluster</name>
        <dbReference type="ChEBI" id="CHEBI:49883"/>
    </cofactor>
    <text evidence="3">Binds 12 [4Fe-4S] clusters.</text>
</comment>
<name>VHUB_METVO</name>